<accession>Q04747</accession>
<gene>
    <name type="primary">srfAB</name>
    <name type="synonym">comL</name>
    <name type="synonym">srfA2</name>
    <name type="ordered locus">BSU03490</name>
</gene>
<dbReference type="EMBL" id="D13262">
    <property type="protein sequence ID" value="BAA02523.1"/>
    <property type="molecule type" value="Genomic_DNA"/>
</dbReference>
<dbReference type="EMBL" id="X70356">
    <property type="protein sequence ID" value="CAA49817.1"/>
    <property type="molecule type" value="Genomic_DNA"/>
</dbReference>
<dbReference type="EMBL" id="D50453">
    <property type="protein sequence ID" value="BAA08983.1"/>
    <property type="molecule type" value="Genomic_DNA"/>
</dbReference>
<dbReference type="EMBL" id="AL009126">
    <property type="protein sequence ID" value="CAB12143.2"/>
    <property type="molecule type" value="Genomic_DNA"/>
</dbReference>
<dbReference type="EMBL" id="X65835">
    <property type="protein sequence ID" value="CAA46678.1"/>
    <property type="molecule type" value="Genomic_DNA"/>
</dbReference>
<dbReference type="PIR" id="I40486">
    <property type="entry name" value="I40486"/>
</dbReference>
<dbReference type="RefSeq" id="NP_388231.2">
    <property type="nucleotide sequence ID" value="NC_000964.3"/>
</dbReference>
<dbReference type="RefSeq" id="WP_010886403.1">
    <property type="nucleotide sequence ID" value="NC_000964.3"/>
</dbReference>
<dbReference type="SMR" id="Q04747"/>
<dbReference type="FunCoup" id="Q04747">
    <property type="interactions" value="76"/>
</dbReference>
<dbReference type="IntAct" id="Q04747">
    <property type="interactions" value="3"/>
</dbReference>
<dbReference type="MINT" id="Q04747"/>
<dbReference type="STRING" id="224308.BSU03490"/>
<dbReference type="jPOST" id="Q04747"/>
<dbReference type="PaxDb" id="224308-BSU03490"/>
<dbReference type="EnsemblBacteria" id="CAB12143">
    <property type="protein sequence ID" value="CAB12143"/>
    <property type="gene ID" value="BSU_03490"/>
</dbReference>
<dbReference type="GeneID" id="938303"/>
<dbReference type="KEGG" id="bsu:BSU03490"/>
<dbReference type="PATRIC" id="fig|224308.179.peg.367"/>
<dbReference type="eggNOG" id="COG1020">
    <property type="taxonomic scope" value="Bacteria"/>
</dbReference>
<dbReference type="InParanoid" id="Q04747"/>
<dbReference type="OrthoDB" id="9765680at2"/>
<dbReference type="PhylomeDB" id="Q04747"/>
<dbReference type="BioCyc" id="BSUB:BSU03490-MONOMER"/>
<dbReference type="UniPathway" id="UPA00181"/>
<dbReference type="Proteomes" id="UP000001570">
    <property type="component" value="Chromosome"/>
</dbReference>
<dbReference type="GO" id="GO:0005737">
    <property type="term" value="C:cytoplasm"/>
    <property type="evidence" value="ECO:0000318"/>
    <property type="project" value="GO_Central"/>
</dbReference>
<dbReference type="GO" id="GO:0005829">
    <property type="term" value="C:cytosol"/>
    <property type="evidence" value="ECO:0000318"/>
    <property type="project" value="GO_Central"/>
</dbReference>
<dbReference type="GO" id="GO:0016874">
    <property type="term" value="F:ligase activity"/>
    <property type="evidence" value="ECO:0007669"/>
    <property type="project" value="UniProtKB-KW"/>
</dbReference>
<dbReference type="GO" id="GO:0031177">
    <property type="term" value="F:phosphopantetheine binding"/>
    <property type="evidence" value="ECO:0000318"/>
    <property type="project" value="GO_Central"/>
</dbReference>
<dbReference type="GO" id="GO:0043041">
    <property type="term" value="P:amino acid activation for nonribosomal peptide biosynthetic process"/>
    <property type="evidence" value="ECO:0000318"/>
    <property type="project" value="GO_Central"/>
</dbReference>
<dbReference type="GO" id="GO:0017000">
    <property type="term" value="P:antibiotic biosynthetic process"/>
    <property type="evidence" value="ECO:0007669"/>
    <property type="project" value="UniProtKB-KW"/>
</dbReference>
<dbReference type="GO" id="GO:0008610">
    <property type="term" value="P:lipid biosynthetic process"/>
    <property type="evidence" value="ECO:0007669"/>
    <property type="project" value="UniProtKB-ARBA"/>
</dbReference>
<dbReference type="GO" id="GO:0044550">
    <property type="term" value="P:secondary metabolite biosynthetic process"/>
    <property type="evidence" value="ECO:0000318"/>
    <property type="project" value="GO_Central"/>
</dbReference>
<dbReference type="GO" id="GO:0030435">
    <property type="term" value="P:sporulation resulting in formation of a cellular spore"/>
    <property type="evidence" value="ECO:0007669"/>
    <property type="project" value="UniProtKB-KW"/>
</dbReference>
<dbReference type="CDD" id="cd05930">
    <property type="entry name" value="A_NRPS"/>
    <property type="match status" value="1"/>
</dbReference>
<dbReference type="CDD" id="cd17645">
    <property type="entry name" value="A_NRPS_LgrA-like"/>
    <property type="match status" value="1"/>
</dbReference>
<dbReference type="CDD" id="cd12117">
    <property type="entry name" value="A_NRPS_Srf_like"/>
    <property type="match status" value="1"/>
</dbReference>
<dbReference type="CDD" id="cd19543">
    <property type="entry name" value="DCL_NRPS"/>
    <property type="match status" value="1"/>
</dbReference>
<dbReference type="CDD" id="cd19534">
    <property type="entry name" value="E_NRPS"/>
    <property type="match status" value="1"/>
</dbReference>
<dbReference type="CDD" id="cd19531">
    <property type="entry name" value="LCL_NRPS-like"/>
    <property type="match status" value="2"/>
</dbReference>
<dbReference type="FunFam" id="3.30.300.30:FF:000010">
    <property type="entry name" value="Enterobactin synthetase component F"/>
    <property type="match status" value="3"/>
</dbReference>
<dbReference type="FunFam" id="3.30.559.30:FF:000001">
    <property type="entry name" value="Non-ribosomal peptide synthetase"/>
    <property type="match status" value="1"/>
</dbReference>
<dbReference type="FunFam" id="3.40.50.12780:FF:000012">
    <property type="entry name" value="Non-ribosomal peptide synthetase"/>
    <property type="match status" value="3"/>
</dbReference>
<dbReference type="FunFam" id="3.40.50.980:FF:000001">
    <property type="entry name" value="Non-ribosomal peptide synthetase"/>
    <property type="match status" value="3"/>
</dbReference>
<dbReference type="FunFam" id="2.30.38.10:FF:000001">
    <property type="entry name" value="Non-ribosomal peptide synthetase PvdI"/>
    <property type="match status" value="2"/>
</dbReference>
<dbReference type="FunFam" id="1.10.1200.10:FF:000005">
    <property type="entry name" value="Nonribosomal peptide synthetase 1"/>
    <property type="match status" value="3"/>
</dbReference>
<dbReference type="Gene3D" id="3.30.300.30">
    <property type="match status" value="3"/>
</dbReference>
<dbReference type="Gene3D" id="3.40.50.980">
    <property type="match status" value="6"/>
</dbReference>
<dbReference type="Gene3D" id="1.10.1200.10">
    <property type="entry name" value="ACP-like"/>
    <property type="match status" value="3"/>
</dbReference>
<dbReference type="Gene3D" id="3.30.559.10">
    <property type="entry name" value="Chloramphenicol acetyltransferase-like domain"/>
    <property type="match status" value="4"/>
</dbReference>
<dbReference type="Gene3D" id="2.30.38.10">
    <property type="entry name" value="Luciferase, Domain 3"/>
    <property type="match status" value="3"/>
</dbReference>
<dbReference type="Gene3D" id="3.30.559.30">
    <property type="entry name" value="Nonribosomal peptide synthetase, condensation domain"/>
    <property type="match status" value="4"/>
</dbReference>
<dbReference type="InterPro" id="IPR010071">
    <property type="entry name" value="AA_adenyl_dom"/>
</dbReference>
<dbReference type="InterPro" id="IPR036736">
    <property type="entry name" value="ACP-like_sf"/>
</dbReference>
<dbReference type="InterPro" id="IPR025110">
    <property type="entry name" value="AMP-bd_C"/>
</dbReference>
<dbReference type="InterPro" id="IPR045851">
    <property type="entry name" value="AMP-bd_C_sf"/>
</dbReference>
<dbReference type="InterPro" id="IPR020845">
    <property type="entry name" value="AMP-binding_CS"/>
</dbReference>
<dbReference type="InterPro" id="IPR000873">
    <property type="entry name" value="AMP-dep_synth/lig_dom"/>
</dbReference>
<dbReference type="InterPro" id="IPR023213">
    <property type="entry name" value="CAT-like_dom_sf"/>
</dbReference>
<dbReference type="InterPro" id="IPR001242">
    <property type="entry name" value="Condensatn"/>
</dbReference>
<dbReference type="InterPro" id="IPR010060">
    <property type="entry name" value="NRPS_synth"/>
</dbReference>
<dbReference type="InterPro" id="IPR020806">
    <property type="entry name" value="PKS_PP-bd"/>
</dbReference>
<dbReference type="InterPro" id="IPR009081">
    <property type="entry name" value="PP-bd_ACP"/>
</dbReference>
<dbReference type="InterPro" id="IPR006162">
    <property type="entry name" value="Ppantetheine_attach_site"/>
</dbReference>
<dbReference type="NCBIfam" id="TIGR01733">
    <property type="entry name" value="AA-adenyl-dom"/>
    <property type="match status" value="3"/>
</dbReference>
<dbReference type="NCBIfam" id="TIGR01720">
    <property type="entry name" value="NRPS-para261"/>
    <property type="match status" value="1"/>
</dbReference>
<dbReference type="NCBIfam" id="NF003417">
    <property type="entry name" value="PRK04813.1"/>
    <property type="match status" value="3"/>
</dbReference>
<dbReference type="PANTHER" id="PTHR45527:SF1">
    <property type="entry name" value="FATTY ACID SYNTHASE"/>
    <property type="match status" value="1"/>
</dbReference>
<dbReference type="PANTHER" id="PTHR45527">
    <property type="entry name" value="NONRIBOSOMAL PEPTIDE SYNTHETASE"/>
    <property type="match status" value="1"/>
</dbReference>
<dbReference type="Pfam" id="PF00501">
    <property type="entry name" value="AMP-binding"/>
    <property type="match status" value="3"/>
</dbReference>
<dbReference type="Pfam" id="PF13193">
    <property type="entry name" value="AMP-binding_C"/>
    <property type="match status" value="3"/>
</dbReference>
<dbReference type="Pfam" id="PF00668">
    <property type="entry name" value="Condensation"/>
    <property type="match status" value="4"/>
</dbReference>
<dbReference type="Pfam" id="PF00550">
    <property type="entry name" value="PP-binding"/>
    <property type="match status" value="3"/>
</dbReference>
<dbReference type="SMART" id="SM00823">
    <property type="entry name" value="PKS_PP"/>
    <property type="match status" value="3"/>
</dbReference>
<dbReference type="SMART" id="SM01294">
    <property type="entry name" value="PKS_PP_betabranch"/>
    <property type="match status" value="1"/>
</dbReference>
<dbReference type="SUPFAM" id="SSF56801">
    <property type="entry name" value="Acetyl-CoA synthetase-like"/>
    <property type="match status" value="3"/>
</dbReference>
<dbReference type="SUPFAM" id="SSF47336">
    <property type="entry name" value="ACP-like"/>
    <property type="match status" value="3"/>
</dbReference>
<dbReference type="SUPFAM" id="SSF52777">
    <property type="entry name" value="CoA-dependent acyltransferases"/>
    <property type="match status" value="8"/>
</dbReference>
<dbReference type="PROSITE" id="PS00455">
    <property type="entry name" value="AMP_BINDING"/>
    <property type="match status" value="3"/>
</dbReference>
<dbReference type="PROSITE" id="PS50075">
    <property type="entry name" value="CARRIER"/>
    <property type="match status" value="3"/>
</dbReference>
<dbReference type="PROSITE" id="PS00012">
    <property type="entry name" value="PHOSPHOPANTETHEINE"/>
    <property type="match status" value="3"/>
</dbReference>
<sequence length="3583" mass="400944">MSKKSIQKVYALTPMQEGMLYHAMLDPHSSSYFTQLELGIHGAFDLEIFEKSVNELIRSYDILRTVFVHQQLQKPRQVVLAERKTKVHYEDISHADENRQKEHIERYKQDVQRQGFNLAKDILFKVAVFRLAADQLYLVWSNHHIMMDGWSMGVLMKSLFQNYEALRAGRTPANGQGKPYSDYIKWLGKQDNEEAESYWSERLAGFEQPSVLPGRLPVKKDEYVNKEYSFTWDETLVARIQQTANLHQVTGPNLFQAVWGIVLSKYNFTDDVIFGTVVSGRPSEINGIETMAGLFINTIPVRVKVERDAAFADIFTAVQQHAVEAERYDYVPLYEIQKRSALDGNLLNHLVAFENYPLDQELENGSMEDRLGFSIKVESAFEQTSFDFNLIVYPGKTWTVKIKYNGAAFDSAFIERTAEHLTRMMEAAVDQPAAFVREYGLVGDEEQRQIVEVFNSTKAELPEGMAVHQVFEEQAKRTPASTAVVYEGTKLTYRELNAAANRLARKLVEHGLQKGETAAIMNDRSVETVVGMLAVLKAGAAYVPLDPALPGDRLRFMAEDSSVRMVLIGNSYTGQAHQLQVPVLTLDIGFEESEAADNLNLPSAPSDLAYIMYTSGSTGKPKGVMIEHKSILRLVKNAGYVPVTEEDRMAQTGAVSFDAGTFEVFGALLNGAALYPVKKETLLDAKQFAAFLREQSITTMWLTSPLFNQLAAKDAGMFGTLRHLIIGGDALVPHIVSKVKQASPSLSLWNGYGPTENTTFSTSFLIDREYGGSIPIGKPIGNSTAYIMDEQQCLQPIGAPGELCVGGIGVARGYVNLPELTEKQFLEDPFRPGERIYRTGDLARWLPDGNIEFLGRIDNQVKVRGFRIELGEIETKLNMAEHVTEAAVIIRKNKADENEICAYFTADREVAVSELRKTLSQSLPDYMVPAHLIQMDSLPLTPNGKINKKELPAPQSEAVQPEYAAPKTESEKKLAEIWEGILGVKAGVTDNFFMIGGHSLKAMMMTAKIQEHFHKEVPIKVLFEKPTIQELALYLEENESKEEQTFEPIRQASYQQHYPVSPAQRRMYILNQLGQANTSYNVPAVLLLEGEVDKDRLENAIQQLINRHEILRTSFDMIDGEVVQTVHKNISFQLEAAKGREEDAEEIIKAFVQPFELNRAPLVRSKLVQLEEKRHLLLIDMHHIITDGSSTGILIGDLAKIYQGADLELPQIHYKDYAVWHKEQTNYQKDEEYWLDVFKGELPILDLPADFERPAERSFAGERVMFGLDKQITAQIKSLMAETDTTMYMFLLAAFNVLLSKYASQDDIIVGSPTAGRTHPDLQGVPGMFVNTVALRTAPAGDKTFAQFLEEVKTASLQAFEHQSYPLEELIEKLPLTRDTSRSPLFSVMFNMQNMEIPSLRLGDLKISSYSMLHHVAKFDLSLEAVEREEDIGLSFDYATALFKDETIRRWSRHFVNIIKAAAANPNVRLSDVDLLSSAETAALLEERHMTQITEATFAALFEKQAQQTPDHSAVKAGGNLLTYRELDEQANQLAHHLRAQGAGNEDIVAIVMDRSAEVMVSILGVMKAGAAFLPIDPDTPEERIRYSLEDSGAKFAVVNERNMTAIGQYEGIIVSLDDGKWRNESKERPSSISGSRNLAYVIYTSGTTGKPKGVQIEHRNLTNYVSWFSEEAGLTENDKTVLLSSYAFDLGYTSMFPVLLGGGELHIVQKETYTAPDEIAHYIKEHGITYIKLTPSLFHTIVNTASFAKDANFESLRLIVLGGEKIIPTDVIAFRKMYGHTEFINHYGPTEATIGAIAGRVDLYEPDAFAKRPTIGRPIANAGALVLNEALKLVPPGASGQLYITGQGLARGYLNRPQLTAERFVENPYSPGSLMYKTGDVVRRLSDGTLAFIGRADDQVKIRGYRIEPKEIETVMLSLSGIQEAVVLAVSEGGLQELCAYYTSDQDIEKAELRYQLSLTLPSHMIPAFFVQVDAIPLTANGKTDRNALPKPNAAQSGGKALAAPETALEESLCRIWQKTLGIEAIGIDDNFFDLGGHSLKGMMLIANIQAELEKSVPLKALFEQPTVRQLAAYMEASAVSGGHQVLKPADKQDMYPLSSAQKRMYVLNQLDRQTISYNMPSVLLMEGELDISRLRDSLNQLVNRHESLRTSFMEANGEPVQRIIEKAEVDLHVFEAKEDEADQKIKEFIRPFDLNDAPLIRAALLRIEAKKHLLLLDMHHIIADGVSRGIFVKELALLYKGEQLPEPTLHYKDFAVWQNEAEQKERMKEHEAYWMSVLSGELPELDLPLDYARPPVQSFKGDTIRFRTGSETAKAVEKLLAETGTTLHMVLHAVFHVFLSKISGQRDIVIGSVTAGRTNADVQDMPGMFVNTLALRMEAKEQQTFAELLELAKQTNLSALEHQEYPFEDLVNQLDLPRDMSRNPLFNVMVTTENPDKEQLTLQNLSISPYEAHQGTSKFDLTLGGFTDENGIGLQLEYATDLFAKETAEKWSEYVLRLLKAVADNPNQPLSSLLLVTETEKQALLEAWKGKALPVPTDKTVHQLFEETVQRHKDRPAVTYNGQSWTYGELNAKANRLARILMDCGISPDDRVGVLTKPSLEMSAAVLGVLKAGAAFVPIDPDYPDQRIEYILQDSGAKLLLKQEGISVPDSYTGDVILLDGSRTILSLPLDENDEGNPETAVTAENLAYMIYTSGTTGQPKGVMVEHHALVNLCFWHHDAFSMTAEDRSAKYAGFGFDASIWEMFPTWTIGAELHVIDEAIRLDIVRLNDYFETNGVTITFLPTQLAEQFMELENTSLRVLLTGGDKLKRAVKKPYTLVNNYGPTENTVVATSAEIHPEEGSLSIGRAIANTRVYILGEGNQVQPEGVAGELCVAGRGLARGYLNREDETAKRFVADPFVPGERMYRTGDLVKWVNGGIEYIGRIDQQVKVRGYRIELSEIEVQLAQLSEVQDAAVTAVKDKGGNTAIAAYVTPETADIEALKSTLKETLPDYMIPAFWVTLNELPVTANGKVDRKALPEPDIEAGSGEYKAPTTDMEELLAGIWQDVLGMSEVGVTDNFFSLGGDSIKGIQMASRLNQHGWKLEMKDLFQHPTIEELTQYVERAEGKQADQGPVEGEVILTPIQRWFFEKNFTNKHHWNQSVMLHAKKGFDPERVEKTLQALIEHHDALRMVYREENGDIVQVYKPIGESKVSFEIVDLYGSDEEMLRSQIKLLANKLQSSLDLRNGPLLKAEQYRTEAGDHLLIAVHHLVVDGVSWRILLEDFASGYMQAEKEESLVFPQKTNSFKDWAEELAAFSQSAHLLQQAEYWSQIAAEQVSPLPKDCETEQRIVKDTSSVLCELTAEDTKHLLTDVHQPYGTEINDILLSALGLTMKEWTKGAKIGINLEGHGREDIIPNVNISRTVGWFTAQYPVVLDISDADASAVIKTVKENLRRIPDKGVGYGILRYFTETAETKGFTPEISFNYLGQFDSEVKTDFFEPSAFDMGRQVSGESEALYALSFSGMIRNGRFVLSCSYNEKEFERATVEEQMERFKENLLMLIRHCTEKEDKEFTPSDFSAEDLEMDEMGDIFDMLEENLK</sequence>
<keyword id="KW-0045">Antibiotic biosynthesis</keyword>
<keyword id="KW-0436">Ligase</keyword>
<keyword id="KW-0511">Multifunctional enzyme</keyword>
<keyword id="KW-0596">Phosphopantetheine</keyword>
<keyword id="KW-0597">Phosphoprotein</keyword>
<keyword id="KW-1185">Reference proteome</keyword>
<keyword id="KW-0677">Repeat</keyword>
<keyword id="KW-0749">Sporulation</keyword>
<feature type="chain" id="PRO_0000193100" description="Surfactin synthase subunit 2">
    <location>
        <begin position="1"/>
        <end position="3583"/>
    </location>
</feature>
<feature type="domain" description="Carrier 1" evidence="1">
    <location>
        <begin position="965"/>
        <end position="1039"/>
    </location>
</feature>
<feature type="domain" description="Carrier 2" evidence="1">
    <location>
        <begin position="2005"/>
        <end position="2080"/>
    </location>
</feature>
<feature type="domain" description="Carrier 3" evidence="1">
    <location>
        <begin position="3034"/>
        <end position="3108"/>
    </location>
</feature>
<feature type="region of interest" description="Domain 1 (valine-activating)">
    <location>
        <begin status="unknown"/>
        <end position="1040"/>
    </location>
</feature>
<feature type="region of interest" description="Domain 2 (aspartate-activating)">
    <location>
        <begin status="unknown"/>
        <end position="2091"/>
    </location>
</feature>
<feature type="region of interest" description="Domain 3 (D-leucine-activating)">
    <location>
        <begin status="unknown"/>
        <end position="3110"/>
    </location>
</feature>
<feature type="modified residue" description="O-(pantetheine 4'-phosphoryl)serine" evidence="1 2">
    <location>
        <position position="999"/>
    </location>
</feature>
<feature type="modified residue" description="O-(pantetheine 4'-phosphoryl)serine" evidence="1 2">
    <location>
        <position position="2040"/>
    </location>
</feature>
<feature type="modified residue" description="O-(pantetheine 4'-phosphoryl)serine" evidence="1">
    <location>
        <position position="3069"/>
    </location>
</feature>
<feature type="sequence conflict" description="In Ref. 2; CAA49817 and 3; BAA08983." evidence="3" ref="2 3">
    <original>F</original>
    <variation>S</variation>
    <location>
        <position position="33"/>
    </location>
</feature>
<feature type="sequence conflict" description="In Ref. 2; CAA49817 and 3; BAA08983." evidence="3" ref="2 3">
    <original>G</original>
    <variation>A</variation>
    <location>
        <position position="42"/>
    </location>
</feature>
<feature type="sequence conflict" description="In Ref. 2; CAA49817 and 3; BAA08983." evidence="3" ref="2 3">
    <original>D</original>
    <variation>Q</variation>
    <location>
        <position position="110"/>
    </location>
</feature>
<feature type="sequence conflict" description="In Ref. 1; BAA02523." evidence="3" ref="1">
    <original>R</original>
    <variation>A</variation>
    <location>
        <position position="113"/>
    </location>
</feature>
<feature type="sequence conflict" description="In Ref. 2; CAA49817 and 3; BAA08983." evidence="3" ref="2 3">
    <original>G</original>
    <variation>A</variation>
    <location>
        <position position="115"/>
    </location>
</feature>
<feature type="sequence conflict" description="In Ref. 2; CAA49817 and 3; BAA08983." evidence="3" ref="2 3">
    <original>V</original>
    <variation>A</variation>
    <location>
        <position position="139"/>
    </location>
</feature>
<feature type="sequence conflict" description="In Ref. 2; CAA49817 and 3; BAA08983." evidence="3" ref="2 3">
    <original>W</original>
    <variation>L</variation>
    <location>
        <position position="259"/>
    </location>
</feature>
<feature type="sequence conflict" description="In Ref. 2; CAA49817 and 3; BAA08983." evidence="3" ref="2 3">
    <original>A</original>
    <variation>R</variation>
    <location>
        <position position="309"/>
    </location>
</feature>
<feature type="sequence conflict" description="In Ref. 1; BAA02523." evidence="3" ref="1">
    <original>TPA</original>
    <variation>SRP</variation>
    <location>
        <begin position="478"/>
        <end position="480"/>
    </location>
</feature>
<feature type="sequence conflict" description="In Ref. 6; CAA46678." evidence="3" ref="6">
    <original>LVEHGLQ</original>
    <variation>ACRTRPS</variation>
    <location>
        <begin position="507"/>
        <end position="513"/>
    </location>
</feature>
<feature type="sequence conflict" description="In Ref. 6; CAA46678." evidence="3" ref="6">
    <location>
        <position position="595"/>
    </location>
</feature>
<feature type="sequence conflict" description="In Ref. 2; CAA49817 and 3; BAA08983." evidence="3" ref="2 3">
    <original>R</original>
    <variation>A</variation>
    <location>
        <position position="648"/>
    </location>
</feature>
<feature type="sequence conflict" description="In Ref. 2; CAA49817 and 3; BAA08983." evidence="3" ref="2 3">
    <original>ETL</original>
    <variation>RHV</variation>
    <location>
        <begin position="680"/>
        <end position="682"/>
    </location>
</feature>
<feature type="sequence conflict" description="In Ref. 6; CAA46678." evidence="3" ref="6">
    <original>EQSIT</original>
    <variation>DKRIS</variation>
    <location>
        <begin position="694"/>
        <end position="698"/>
    </location>
</feature>
<feature type="sequence conflict" description="In Ref. 6; CAA46678." evidence="3" ref="6">
    <original>M</original>
    <variation>L</variation>
    <location>
        <position position="788"/>
    </location>
</feature>
<feature type="sequence conflict" description="In Ref. 1; BAA02523." evidence="3" ref="1">
    <original>PL</original>
    <variation>LV</variation>
    <location>
        <begin position="939"/>
        <end position="940"/>
    </location>
</feature>
<feature type="sequence conflict" description="In Ref. 1; BAA02523." evidence="3" ref="1">
    <original>N</original>
    <variation>I</variation>
    <location>
        <position position="1038"/>
    </location>
</feature>
<feature type="sequence conflict" description="In Ref. 2; CAA49817 and 3; BAA08983." evidence="3" ref="2 3">
    <original>Q</original>
    <variation>H</variation>
    <location>
        <position position="1133"/>
    </location>
</feature>
<feature type="sequence conflict" description="In Ref. 1; BAA02523." evidence="3" ref="1">
    <original>V</original>
    <variation>C</variation>
    <location>
        <position position="1310"/>
    </location>
</feature>
<feature type="sequence conflict" description="In Ref. 2; CAA49817 and 3; BAA08983." evidence="3" ref="2 3">
    <original>V</original>
    <variation>G</variation>
    <location>
        <position position="1333"/>
    </location>
</feature>
<feature type="sequence conflict" description="In Ref. 1; BAA02523." evidence="3" ref="1">
    <original>P</original>
    <variation>R</variation>
    <location>
        <position position="1384"/>
    </location>
</feature>
<feature type="sequence conflict" description="In Ref. 2; CAA49817 and 3; BAA08983." evidence="3" ref="2 3">
    <original>E</original>
    <variation>G</variation>
    <location>
        <position position="1582"/>
    </location>
</feature>
<feature type="sequence conflict" description="In Ref. 2; CAA49817 and 3; BAA08983." evidence="3" ref="2 3">
    <original>E</original>
    <variation>KRRADG</variation>
    <location>
        <position position="1677"/>
    </location>
</feature>
<feature type="sequence conflict" description="In Ref. 2; CAA49817 and 3; BAA08983." evidence="3" ref="2 3">
    <original>S</original>
    <variation>C</variation>
    <location>
        <position position="1695"/>
    </location>
</feature>
<feature type="sequence conflict" description="In Ref. 2; CAA49817 and 3; BAA08983." evidence="3" ref="2 3">
    <original>K</original>
    <variation>F</variation>
    <location>
        <position position="1750"/>
    </location>
</feature>
<feature type="sequence conflict" description="In Ref. 1; BAA02523." evidence="3" ref="1">
    <original>T</original>
    <variation>S</variation>
    <location>
        <position position="1782"/>
    </location>
</feature>
<feature type="sequence conflict" description="In Ref. 1; BAA02523." evidence="3" ref="1">
    <original>GAIAGRVDLYEPDAFAKRPTIG</original>
    <variation>APSPGGLICMSRCICETPDNR</variation>
    <location>
        <begin position="1796"/>
        <end position="1817"/>
    </location>
</feature>
<feature type="sequence conflict" description="In Ref. 2; CAA49817 and 3; BAA08983." evidence="3" ref="2 3">
    <original>PK</original>
    <variation>LG</variation>
    <location>
        <begin position="1910"/>
        <end position="1911"/>
    </location>
</feature>
<feature type="sequence conflict" description="In Ref. 1; BAA02523." evidence="3" ref="1">
    <original>R</original>
    <variation>C</variation>
    <location>
        <position position="2070"/>
    </location>
</feature>
<feature type="sequence conflict" description="In Ref. 1; BAA02523." evidence="3" ref="1">
    <original>A</original>
    <variation>V</variation>
    <location>
        <position position="2074"/>
    </location>
</feature>
<feature type="sequence conflict" description="In Ref. 2; CAA49817 and 3; BAA08983." evidence="3" ref="2 3">
    <original>SRLRDSLN</original>
    <variation>WPARLTP</variation>
    <location>
        <begin position="2134"/>
        <end position="2141"/>
    </location>
</feature>
<feature type="sequence conflict" description="In Ref. 1; BAA02523." evidence="3" ref="1">
    <original>SR</original>
    <variation>WP</variation>
    <location>
        <begin position="2134"/>
        <end position="2135"/>
    </location>
</feature>
<feature type="sequence conflict" description="In Ref. 2; CAA49817 and 3; BAA08983." evidence="3" ref="2 3">
    <original>Q</original>
    <variation>E</variation>
    <location>
        <position position="2441"/>
    </location>
</feature>
<feature type="sequence conflict" description="In Ref. 1; BAA02523." evidence="3" ref="1">
    <original>ATDLF</original>
    <variation>RQICS</variation>
    <location>
        <begin position="2481"/>
        <end position="2485"/>
    </location>
</feature>
<feature type="sequence conflict" description="In Ref. 1; BAA02523." evidence="3" ref="1">
    <original>TVHQLFEETVQRHKDRPAVTY</original>
    <variation>DGCISYSKRLSSATKTARLSHT</variation>
    <location>
        <begin position="2542"/>
        <end position="2562"/>
    </location>
</feature>
<feature type="sequence conflict" description="In Ref. 1; BAA02523." evidence="3" ref="1">
    <original>MSAAVLGV</original>
    <variation>KCPPRCSAS</variation>
    <location>
        <begin position="2604"/>
        <end position="2611"/>
    </location>
</feature>
<feature type="sequence conflict" description="In Ref. 1; BAA02523." evidence="3" ref="1">
    <original>KL</original>
    <variation>NV</variation>
    <location>
        <begin position="2640"/>
        <end position="2641"/>
    </location>
</feature>
<feature type="sequence conflict" description="In Ref. 2; CAA49817 and 3; BAA08983." evidence="3" ref="2 3">
    <original>H</original>
    <variation>D</variation>
    <location>
        <position position="2709"/>
    </location>
</feature>
<feature type="sequence conflict" description="In Ref. 2; CAA49817 and 3; BAA08983." evidence="3" ref="2 3">
    <original>H</original>
    <variation>D</variation>
    <location>
        <position position="2719"/>
    </location>
</feature>
<feature type="sequence conflict" description="In Ref. 1; BAA02523." evidence="3" ref="1">
    <original>GELCVA</original>
    <variation>RALRG</variation>
    <location>
        <begin position="2872"/>
        <end position="2877"/>
    </location>
</feature>
<feature type="sequence conflict" description="In Ref. 1; BAA02523." evidence="3" ref="1">
    <original>RF</original>
    <variation>L</variation>
    <location>
        <begin position="2895"/>
        <end position="2896"/>
    </location>
</feature>
<feature type="sequence conflict" description="In Ref. 2; CAA49817 and 3; BAA08983." evidence="3" ref="2 3">
    <original>QDA</original>
    <variation>EDR</variation>
    <location>
        <begin position="2954"/>
        <end position="2956"/>
    </location>
</feature>
<feature type="sequence conflict" description="In Ref. 2; CAA49817 and 3; BAA08983." evidence="3" ref="2 3">
    <original>A</original>
    <variation>R</variation>
    <location>
        <position position="2960"/>
    </location>
</feature>
<feature type="sequence conflict" description="In Ref. 2; CAA49817 and 3; BAA08983." evidence="3" ref="2 3">
    <original>EQ</original>
    <variation>AE</variation>
    <location>
        <begin position="3236"/>
        <end position="3237"/>
    </location>
</feature>
<feature type="sequence conflict" description="In Ref. 2; CAA49817 and 3; BAA08983." evidence="3" ref="2 3">
    <original>Q</original>
    <variation>E</variation>
    <location>
        <position position="3533"/>
    </location>
</feature>
<evidence type="ECO:0000255" key="1">
    <source>
        <dbReference type="PROSITE-ProRule" id="PRU00258"/>
    </source>
</evidence>
<evidence type="ECO:0000269" key="2">
    <source>
    </source>
</evidence>
<evidence type="ECO:0000305" key="3"/>
<protein>
    <recommendedName>
        <fullName>Surfactin synthase subunit 2</fullName>
    </recommendedName>
</protein>
<name>SRFAB_BACSU</name>
<proteinExistence type="evidence at protein level"/>
<comment type="function">
    <text>This protein is a multifunctional enzyme able to activate and polymerize the amino acids Leu, Glu, Asp and Val. Activation sites for these AA consist of individual domains.</text>
</comment>
<comment type="cofactor">
    <cofactor>
        <name>pantetheine 4'-phosphate</name>
        <dbReference type="ChEBI" id="CHEBI:47942"/>
    </cofactor>
    <text>Binds 3 phosphopantetheines covalently.</text>
</comment>
<comment type="pathway">
    <text>Antibiotic biosynthesis; surfactin biosynthesis.</text>
</comment>
<comment type="similarity">
    <text evidence="3">Belongs to the ATP-dependent AMP-binding enzyme family.</text>
</comment>
<comment type="caution">
    <text evidence="3">The phosphoserine observed at Ser-999 and Ser-2040 in PubMed:17218307 may result from the secondary neutral loss of pantetheine from the phosphodiester linked cofactor.</text>
</comment>
<organism>
    <name type="scientific">Bacillus subtilis (strain 168)</name>
    <dbReference type="NCBI Taxonomy" id="224308"/>
    <lineage>
        <taxon>Bacteria</taxon>
        <taxon>Bacillati</taxon>
        <taxon>Bacillota</taxon>
        <taxon>Bacilli</taxon>
        <taxon>Bacillales</taxon>
        <taxon>Bacillaceae</taxon>
        <taxon>Bacillus</taxon>
    </lineage>
</organism>
<reference key="1">
    <citation type="journal article" date="1993" name="Nucleic Acids Res.">
        <title>Nucleotide sequence of 5' portion of srfA that contains the region required for competence establishment in Bacillus subtilis.</title>
        <authorList>
            <person name="Fuma S."/>
            <person name="Fujishima Y."/>
            <person name="Corbell N."/>
            <person name="D'Souza C."/>
            <person name="Nakano M.M."/>
            <person name="Zuber P."/>
            <person name="Yamane K."/>
        </authorList>
    </citation>
    <scope>NUCLEOTIDE SEQUENCE [GENOMIC DNA] OF 1-3073</scope>
    <source>
        <strain>168</strain>
    </source>
</reference>
<reference key="2">
    <citation type="journal article" date="1993" name="Mol. Microbiol.">
        <title>Sequence and analysis of the genetic locus responsible for surfactin synthesis in Bacillus subtilis.</title>
        <authorList>
            <person name="Cosmina P."/>
            <person name="Rodriguez F."/>
            <person name="de Ferra F."/>
            <person name="Grandi G."/>
            <person name="Perego M."/>
            <person name="Venema G."/>
            <person name="van Sinderen D."/>
        </authorList>
    </citation>
    <scope>NUCLEOTIDE SEQUENCE [GENOMIC DNA]</scope>
    <source>
        <strain>168 / JH642</strain>
    </source>
</reference>
<reference key="3">
    <citation type="journal article" date="1996" name="Microbiology">
        <title>The 25 degrees-36 degrees region of the Bacillus subtilis chromosome: determination of the sequence of a 146 kb segment and identification of 113 genes.</title>
        <authorList>
            <person name="Yamane K."/>
            <person name="Kumano M."/>
            <person name="Kurita K."/>
        </authorList>
    </citation>
    <scope>NUCLEOTIDE SEQUENCE [GENOMIC DNA]</scope>
    <source>
        <strain>168</strain>
    </source>
</reference>
<reference key="4">
    <citation type="journal article" date="1997" name="Nature">
        <title>The complete genome sequence of the Gram-positive bacterium Bacillus subtilis.</title>
        <authorList>
            <person name="Kunst F."/>
            <person name="Ogasawara N."/>
            <person name="Moszer I."/>
            <person name="Albertini A.M."/>
            <person name="Alloni G."/>
            <person name="Azevedo V."/>
            <person name="Bertero M.G."/>
            <person name="Bessieres P."/>
            <person name="Bolotin A."/>
            <person name="Borchert S."/>
            <person name="Borriss R."/>
            <person name="Boursier L."/>
            <person name="Brans A."/>
            <person name="Braun M."/>
            <person name="Brignell S.C."/>
            <person name="Bron S."/>
            <person name="Brouillet S."/>
            <person name="Bruschi C.V."/>
            <person name="Caldwell B."/>
            <person name="Capuano V."/>
            <person name="Carter N.M."/>
            <person name="Choi S.-K."/>
            <person name="Codani J.-J."/>
            <person name="Connerton I.F."/>
            <person name="Cummings N.J."/>
            <person name="Daniel R.A."/>
            <person name="Denizot F."/>
            <person name="Devine K.M."/>
            <person name="Duesterhoeft A."/>
            <person name="Ehrlich S.D."/>
            <person name="Emmerson P.T."/>
            <person name="Entian K.-D."/>
            <person name="Errington J."/>
            <person name="Fabret C."/>
            <person name="Ferrari E."/>
            <person name="Foulger D."/>
            <person name="Fritz C."/>
            <person name="Fujita M."/>
            <person name="Fujita Y."/>
            <person name="Fuma S."/>
            <person name="Galizzi A."/>
            <person name="Galleron N."/>
            <person name="Ghim S.-Y."/>
            <person name="Glaser P."/>
            <person name="Goffeau A."/>
            <person name="Golightly E.J."/>
            <person name="Grandi G."/>
            <person name="Guiseppi G."/>
            <person name="Guy B.J."/>
            <person name="Haga K."/>
            <person name="Haiech J."/>
            <person name="Harwood C.R."/>
            <person name="Henaut A."/>
            <person name="Hilbert H."/>
            <person name="Holsappel S."/>
            <person name="Hosono S."/>
            <person name="Hullo M.-F."/>
            <person name="Itaya M."/>
            <person name="Jones L.-M."/>
            <person name="Joris B."/>
            <person name="Karamata D."/>
            <person name="Kasahara Y."/>
            <person name="Klaerr-Blanchard M."/>
            <person name="Klein C."/>
            <person name="Kobayashi Y."/>
            <person name="Koetter P."/>
            <person name="Koningstein G."/>
            <person name="Krogh S."/>
            <person name="Kumano M."/>
            <person name="Kurita K."/>
            <person name="Lapidus A."/>
            <person name="Lardinois S."/>
            <person name="Lauber J."/>
            <person name="Lazarevic V."/>
            <person name="Lee S.-M."/>
            <person name="Levine A."/>
            <person name="Liu H."/>
            <person name="Masuda S."/>
            <person name="Mauel C."/>
            <person name="Medigue C."/>
            <person name="Medina N."/>
            <person name="Mellado R.P."/>
            <person name="Mizuno M."/>
            <person name="Moestl D."/>
            <person name="Nakai S."/>
            <person name="Noback M."/>
            <person name="Noone D."/>
            <person name="O'Reilly M."/>
            <person name="Ogawa K."/>
            <person name="Ogiwara A."/>
            <person name="Oudega B."/>
            <person name="Park S.-H."/>
            <person name="Parro V."/>
            <person name="Pohl T.M."/>
            <person name="Portetelle D."/>
            <person name="Porwollik S."/>
            <person name="Prescott A.M."/>
            <person name="Presecan E."/>
            <person name="Pujic P."/>
            <person name="Purnelle B."/>
            <person name="Rapoport G."/>
            <person name="Rey M."/>
            <person name="Reynolds S."/>
            <person name="Rieger M."/>
            <person name="Rivolta C."/>
            <person name="Rocha E."/>
            <person name="Roche B."/>
            <person name="Rose M."/>
            <person name="Sadaie Y."/>
            <person name="Sato T."/>
            <person name="Scanlan E."/>
            <person name="Schleich S."/>
            <person name="Schroeter R."/>
            <person name="Scoffone F."/>
            <person name="Sekiguchi J."/>
            <person name="Sekowska A."/>
            <person name="Seror S.J."/>
            <person name="Serror P."/>
            <person name="Shin B.-S."/>
            <person name="Soldo B."/>
            <person name="Sorokin A."/>
            <person name="Tacconi E."/>
            <person name="Takagi T."/>
            <person name="Takahashi H."/>
            <person name="Takemaru K."/>
            <person name="Takeuchi M."/>
            <person name="Tamakoshi A."/>
            <person name="Tanaka T."/>
            <person name="Terpstra P."/>
            <person name="Tognoni A."/>
            <person name="Tosato V."/>
            <person name="Uchiyama S."/>
            <person name="Vandenbol M."/>
            <person name="Vannier F."/>
            <person name="Vassarotti A."/>
            <person name="Viari A."/>
            <person name="Wambutt R."/>
            <person name="Wedler E."/>
            <person name="Wedler H."/>
            <person name="Weitzenegger T."/>
            <person name="Winters P."/>
            <person name="Wipat A."/>
            <person name="Yamamoto H."/>
            <person name="Yamane K."/>
            <person name="Yasumoto K."/>
            <person name="Yata K."/>
            <person name="Yoshida K."/>
            <person name="Yoshikawa H.-F."/>
            <person name="Zumstein E."/>
            <person name="Yoshikawa H."/>
            <person name="Danchin A."/>
        </authorList>
    </citation>
    <scope>NUCLEOTIDE SEQUENCE [LARGE SCALE GENOMIC DNA]</scope>
    <source>
        <strain>168</strain>
    </source>
</reference>
<reference key="5">
    <citation type="journal article" date="2009" name="Microbiology">
        <title>From a consortium sequence to a unified sequence: the Bacillus subtilis 168 reference genome a decade later.</title>
        <authorList>
            <person name="Barbe V."/>
            <person name="Cruveiller S."/>
            <person name="Kunst F."/>
            <person name="Lenoble P."/>
            <person name="Meurice G."/>
            <person name="Sekowska A."/>
            <person name="Vallenet D."/>
            <person name="Wang T."/>
            <person name="Moszer I."/>
            <person name="Medigue C."/>
            <person name="Danchin A."/>
        </authorList>
    </citation>
    <scope>SEQUENCE REVISION</scope>
</reference>
<reference key="6">
    <citation type="journal article" date="1992" name="FEMS Microbiol. Lett.">
        <title>Identification of putative multifunctional peptide synthetase genes using highly conserved oligonucleotide sequences derived from known synthetases.</title>
        <authorList>
            <person name="Borchert S."/>
            <person name="Patil S.S."/>
            <person name="Marahiel M.A."/>
        </authorList>
    </citation>
    <scope>NUCLEOTIDE SEQUENCE [GENOMIC DNA] OF 507-795</scope>
    <source>
        <strain>ATCC 21332 / IAM 1213</strain>
    </source>
</reference>
<reference key="7">
    <citation type="journal article" date="2007" name="Mol. Cell. Proteomics">
        <title>The serine/threonine/tyrosine phosphoproteome of the model bacterium Bacillus subtilis.</title>
        <authorList>
            <person name="Macek B."/>
            <person name="Mijakovic I."/>
            <person name="Olsen J.V."/>
            <person name="Gnad F."/>
            <person name="Kumar C."/>
            <person name="Jensen P.R."/>
            <person name="Mann M."/>
        </authorList>
    </citation>
    <scope>PHOSPHOPANTETHEINYLATION [LARGE SCALE ANALYSIS] AT SER-999 AND SER-2040</scope>
    <scope>IDENTIFICATION BY MASS SPECTROMETRY</scope>
    <source>
        <strain>168</strain>
    </source>
</reference>